<comment type="function">
    <text evidence="2">Thiol-specific peroxidase that catalyzes the reduction of hydrogen peroxide and organic hydroperoxides to water and alcohols, respectively. Plays a role in cell protection against oxidative stress by detoxifying peroxides.</text>
</comment>
<comment type="catalytic activity">
    <reaction evidence="6">
        <text>a hydroperoxide + [thioredoxin]-dithiol = an alcohol + [thioredoxin]-disulfide + H2O</text>
        <dbReference type="Rhea" id="RHEA:62620"/>
        <dbReference type="Rhea" id="RHEA-COMP:10698"/>
        <dbReference type="Rhea" id="RHEA-COMP:10700"/>
        <dbReference type="ChEBI" id="CHEBI:15377"/>
        <dbReference type="ChEBI" id="CHEBI:29950"/>
        <dbReference type="ChEBI" id="CHEBI:30879"/>
        <dbReference type="ChEBI" id="CHEBI:35924"/>
        <dbReference type="ChEBI" id="CHEBI:50058"/>
        <dbReference type="EC" id="1.11.1.24"/>
    </reaction>
</comment>
<comment type="subunit">
    <text evidence="6">Monomer.</text>
</comment>
<comment type="subcellular location">
    <subcellularLocation>
        <location evidence="2">Plastid</location>
        <location evidence="2">Chloroplast thylakoid lumen</location>
    </subcellularLocation>
</comment>
<comment type="miscellaneous">
    <text evidence="1">The active site is a conserved redox-active cysteine residue, the peroxidatic cysteine (C(P)), which makes the nucleophilic attack on the peroxide substrate. The peroxide oxidizes the C(P)-SH to cysteine sulfenic acid (C(P)-SOH), which then reacts with another cysteine residue, the resolving cysteine (C(R)), to form a disulfide bridge. The disulfide is subsequently reduced by an appropriate electron donor to complete the catalytic cycle. In this atypical 2-Cys peroxiredoxin, C(R) is present in the same subunit to form an intramolecular disulfide. The disulfide is subsequently reduced by thioredoxin.</text>
</comment>
<comment type="similarity">
    <text evidence="7">Belongs to the peroxiredoxin family. BCP/PrxQ subfamily.</text>
</comment>
<protein>
    <recommendedName>
        <fullName>Peroxiredoxin Q, chloroplastic</fullName>
        <ecNumber evidence="6">1.11.1.24</ecNumber>
    </recommendedName>
    <alternativeName>
        <fullName>Thioredoxin peroxidase</fullName>
    </alternativeName>
    <alternativeName>
        <fullName evidence="7">Thioredoxin-dependent peroxiredoxin Q</fullName>
    </alternativeName>
</protein>
<sequence>QTLQTSSQSQFHGLKFSHASSFKSPSAPLRKNSIFAKVTKGSTPPPFTLKDQEGRPVSLSKFKGKPVVVYFYPADETPGCTKQACAFRDSYEKFKKAGAEVVGISGDSSESHKAFAKKYKLPFTLLSDEGNKVRKEWGVPSDLFGTLPGRETYVLDKNGVVQLVYNNQFQPEKHIDETLKLLQSLK</sequence>
<organism>
    <name type="scientific">Sedum lineare</name>
    <name type="common">Needle stonecrop</name>
    <dbReference type="NCBI Taxonomy" id="114260"/>
    <lineage>
        <taxon>Eukaryota</taxon>
        <taxon>Viridiplantae</taxon>
        <taxon>Streptophyta</taxon>
        <taxon>Embryophyta</taxon>
        <taxon>Tracheophyta</taxon>
        <taxon>Spermatophyta</taxon>
        <taxon>Magnoliopsida</taxon>
        <taxon>eudicotyledons</taxon>
        <taxon>Gunneridae</taxon>
        <taxon>Pentapetalae</taxon>
        <taxon>Saxifragales</taxon>
        <taxon>Crassulaceae</taxon>
        <taxon>Sedum</taxon>
    </lineage>
</organism>
<reference key="1">
    <citation type="journal article" date="2000" name="Biochem. J.">
        <title>A novel peroxiredoxin of the plant Sedum lineare is a homologue of Escherichia coli bacterioferritin co-migratory protein (Bcp).</title>
        <authorList>
            <person name="Kong W."/>
            <person name="Shiota S."/>
            <person name="Shi Y."/>
            <person name="Nakayama H."/>
            <person name="Nakayama K."/>
        </authorList>
    </citation>
    <scope>NUCLEOTIDE SEQUENCE [MRNA]</scope>
    <scope>SUBUNIT</scope>
    <scope>CATALYTIC ACTIVITY</scope>
</reference>
<keyword id="KW-0049">Antioxidant</keyword>
<keyword id="KW-0150">Chloroplast</keyword>
<keyword id="KW-1015">Disulfide bond</keyword>
<keyword id="KW-0560">Oxidoreductase</keyword>
<keyword id="KW-0575">Peroxidase</keyword>
<keyword id="KW-0934">Plastid</keyword>
<keyword id="KW-0676">Redox-active center</keyword>
<keyword id="KW-0793">Thylakoid</keyword>
<keyword id="KW-0809">Transit peptide</keyword>
<feature type="transit peptide" description="Chloroplast" evidence="3">
    <location>
        <begin position="1" status="less than"/>
        <end position="36"/>
    </location>
</feature>
<feature type="chain" id="PRO_5000049527" description="Peroxiredoxin Q, chloroplastic">
    <location>
        <begin position="37"/>
        <end position="186"/>
    </location>
</feature>
<feature type="domain" description="Thioredoxin" evidence="4">
    <location>
        <begin position="38"/>
        <end position="186"/>
    </location>
</feature>
<feature type="region of interest" description="Disordered" evidence="5">
    <location>
        <begin position="33"/>
        <end position="55"/>
    </location>
</feature>
<feature type="active site" description="Cysteine sulfenic acid (-SOH) intermediate" evidence="1">
    <location>
        <position position="80"/>
    </location>
</feature>
<feature type="disulfide bond" description="Redox-active" evidence="1">
    <location>
        <begin position="80"/>
        <end position="85"/>
    </location>
</feature>
<feature type="non-terminal residue">
    <location>
        <position position="1"/>
    </location>
</feature>
<proteinExistence type="evidence at protein level"/>
<gene>
    <name type="primary">PRXQ</name>
</gene>
<accession>Q9MB35</accession>
<dbReference type="EC" id="1.11.1.24" evidence="6"/>
<dbReference type="EMBL" id="AB037598">
    <property type="protein sequence ID" value="BAA90524.1"/>
    <property type="molecule type" value="mRNA"/>
</dbReference>
<dbReference type="SMR" id="Q9MB35"/>
<dbReference type="PeroxiBase" id="4304">
    <property type="entry name" value="SlinPrxQ"/>
</dbReference>
<dbReference type="BioCyc" id="MetaCyc:MONOMER-20842"/>
<dbReference type="BRENDA" id="1.11.1.24">
    <property type="organism ID" value="16852"/>
</dbReference>
<dbReference type="GO" id="GO:0009543">
    <property type="term" value="C:chloroplast thylakoid lumen"/>
    <property type="evidence" value="ECO:0007669"/>
    <property type="project" value="UniProtKB-SubCell"/>
</dbReference>
<dbReference type="GO" id="GO:0009535">
    <property type="term" value="C:chloroplast thylakoid membrane"/>
    <property type="evidence" value="ECO:0007669"/>
    <property type="project" value="TreeGrafter"/>
</dbReference>
<dbReference type="GO" id="GO:0008379">
    <property type="term" value="F:thioredoxin peroxidase activity"/>
    <property type="evidence" value="ECO:0007669"/>
    <property type="project" value="TreeGrafter"/>
</dbReference>
<dbReference type="GO" id="GO:0045454">
    <property type="term" value="P:cell redox homeostasis"/>
    <property type="evidence" value="ECO:0007669"/>
    <property type="project" value="TreeGrafter"/>
</dbReference>
<dbReference type="GO" id="GO:0034599">
    <property type="term" value="P:cellular response to oxidative stress"/>
    <property type="evidence" value="ECO:0007669"/>
    <property type="project" value="TreeGrafter"/>
</dbReference>
<dbReference type="CDD" id="cd03017">
    <property type="entry name" value="PRX_BCP"/>
    <property type="match status" value="1"/>
</dbReference>
<dbReference type="FunFam" id="3.40.30.10:FF:000122">
    <property type="entry name" value="Peroxiredoxin Q chloroplastic"/>
    <property type="match status" value="1"/>
</dbReference>
<dbReference type="Gene3D" id="3.40.30.10">
    <property type="entry name" value="Glutaredoxin"/>
    <property type="match status" value="1"/>
</dbReference>
<dbReference type="InterPro" id="IPR000866">
    <property type="entry name" value="AhpC/TSA"/>
</dbReference>
<dbReference type="InterPro" id="IPR050924">
    <property type="entry name" value="Peroxiredoxin_BCP/PrxQ"/>
</dbReference>
<dbReference type="InterPro" id="IPR036249">
    <property type="entry name" value="Thioredoxin-like_sf"/>
</dbReference>
<dbReference type="InterPro" id="IPR013766">
    <property type="entry name" value="Thioredoxin_domain"/>
</dbReference>
<dbReference type="PANTHER" id="PTHR42801:SF4">
    <property type="entry name" value="AHPC_TSA FAMILY PROTEIN"/>
    <property type="match status" value="1"/>
</dbReference>
<dbReference type="PANTHER" id="PTHR42801">
    <property type="entry name" value="THIOREDOXIN-DEPENDENT PEROXIDE REDUCTASE"/>
    <property type="match status" value="1"/>
</dbReference>
<dbReference type="Pfam" id="PF00578">
    <property type="entry name" value="AhpC-TSA"/>
    <property type="match status" value="1"/>
</dbReference>
<dbReference type="SUPFAM" id="SSF52833">
    <property type="entry name" value="Thioredoxin-like"/>
    <property type="match status" value="1"/>
</dbReference>
<dbReference type="PROSITE" id="PS51352">
    <property type="entry name" value="THIOREDOXIN_2"/>
    <property type="match status" value="1"/>
</dbReference>
<evidence type="ECO:0000250" key="1">
    <source>
        <dbReference type="UniProtKB" id="P0AE52"/>
    </source>
</evidence>
<evidence type="ECO:0000250" key="2">
    <source>
        <dbReference type="UniProtKB" id="Q9LU86"/>
    </source>
</evidence>
<evidence type="ECO:0000255" key="3"/>
<evidence type="ECO:0000255" key="4">
    <source>
        <dbReference type="PROSITE-ProRule" id="PRU00691"/>
    </source>
</evidence>
<evidence type="ECO:0000256" key="5">
    <source>
        <dbReference type="SAM" id="MobiDB-lite"/>
    </source>
</evidence>
<evidence type="ECO:0000269" key="6">
    <source>
    </source>
</evidence>
<evidence type="ECO:0000305" key="7"/>
<name>PERQ_SEDLI</name>